<feature type="chain" id="PRO_1000117291" description="DNA mismatch repair protein MutS">
    <location>
        <begin position="1"/>
        <end position="855"/>
    </location>
</feature>
<feature type="region of interest" description="Disordered" evidence="2">
    <location>
        <begin position="796"/>
        <end position="816"/>
    </location>
</feature>
<feature type="binding site" evidence="1">
    <location>
        <begin position="613"/>
        <end position="620"/>
    </location>
    <ligand>
        <name>ATP</name>
        <dbReference type="ChEBI" id="CHEBI:30616"/>
    </ligand>
</feature>
<reference key="1">
    <citation type="journal article" date="2009" name="Genome Res.">
        <title>Newly introduced genomic prophage islands are critical determinants of in vivo competitiveness in the Liverpool epidemic strain of Pseudomonas aeruginosa.</title>
        <authorList>
            <person name="Winstanley C."/>
            <person name="Langille M.G.I."/>
            <person name="Fothergill J.L."/>
            <person name="Kukavica-Ibrulj I."/>
            <person name="Paradis-Bleau C."/>
            <person name="Sanschagrin F."/>
            <person name="Thomson N.R."/>
            <person name="Winsor G.L."/>
            <person name="Quail M.A."/>
            <person name="Lennard N."/>
            <person name="Bignell A."/>
            <person name="Clarke L."/>
            <person name="Seeger K."/>
            <person name="Saunders D."/>
            <person name="Harris D."/>
            <person name="Parkhill J."/>
            <person name="Hancock R.E.W."/>
            <person name="Brinkman F.S.L."/>
            <person name="Levesque R.C."/>
        </authorList>
    </citation>
    <scope>NUCLEOTIDE SEQUENCE [LARGE SCALE GENOMIC DNA]</scope>
    <source>
        <strain>LESB58</strain>
    </source>
</reference>
<accession>B7V8C8</accession>
<sequence length="855" mass="94994">MTDLSQHTPMMQQYFKLKHQHPDQLMFYRMGDFYELFYEDAKKAAKLLDITLTARGQSGGKAIPMAGIPFHSAEGYLAKLVKLGESVAICEQIGDPATSKGPVERQVVRIITPGTVSDEALLDERRDNLLAAILGDERLFGLAVLDITSGRFSVQEIKGWETLLAELERLNPAELLIPDDWPQGLPSEKRRGVRRRAPWDFDRDSAHKSLCQQFGTQDLKGFGCQNLTLAIGAAGCLLAYAKETQRTALPHLRSLRHDRLDDTVILDGASRRNLELDINLSGGRENTLQSVVDRCQTAMASRLMSRWLNRPLRDRAVLEARQESIACLLERYRFENLQPQLKEIGDLERILARIGLRNARPRDLARLRDALAALPDLQNAMTELEAPHLQALATTIGTYPELAELLAKAIIDNPPAVIRDGGVIKTGYDAELDELQALSENAGQFLMDLEAREKARTGLPNLKVGYNRIHGYFIELPRVQAEQAPADYIRRQTLKGAERFITPELKAFEDKALSAQSRALAREKALYEELLERLIGHLAPLQDSASALAELDVLANLAERALNLDLNRPRFVEHTCLHIEQGRHPVVEQVLETPFVANDLALDADTRMLVITGPNMGGKSTYMRQTALIVLLAHIGSFVPAARCELSLVDRIFTRIGSSDDLAGGRSTFMVEMSETANILHNATDKSLVLMDEVGRGTSTFDGLSLAWAAAEDLARTRAFTLFATHYFELTVLPESQPAVANVHLNATEHNERIVFLHHVLPGPASQSYGLAVAQLAGVPAPVIQRAREHLKRLETTSLPHEMPSQQSGKPASPMQSDLFASLPHPVIDELSRINPDDISPRQALDLLYAWKMRV</sequence>
<evidence type="ECO:0000255" key="1">
    <source>
        <dbReference type="HAMAP-Rule" id="MF_00096"/>
    </source>
</evidence>
<evidence type="ECO:0000256" key="2">
    <source>
        <dbReference type="SAM" id="MobiDB-lite"/>
    </source>
</evidence>
<keyword id="KW-0067">ATP-binding</keyword>
<keyword id="KW-0227">DNA damage</keyword>
<keyword id="KW-0234">DNA repair</keyword>
<keyword id="KW-0238">DNA-binding</keyword>
<keyword id="KW-0547">Nucleotide-binding</keyword>
<proteinExistence type="inferred from homology"/>
<comment type="function">
    <text evidence="1">This protein is involved in the repair of mismatches in DNA. It is possible that it carries out the mismatch recognition step. This protein has a weak ATPase activity.</text>
</comment>
<comment type="similarity">
    <text evidence="1">Belongs to the DNA mismatch repair MutS family.</text>
</comment>
<organism>
    <name type="scientific">Pseudomonas aeruginosa (strain LESB58)</name>
    <dbReference type="NCBI Taxonomy" id="557722"/>
    <lineage>
        <taxon>Bacteria</taxon>
        <taxon>Pseudomonadati</taxon>
        <taxon>Pseudomonadota</taxon>
        <taxon>Gammaproteobacteria</taxon>
        <taxon>Pseudomonadales</taxon>
        <taxon>Pseudomonadaceae</taxon>
        <taxon>Pseudomonas</taxon>
    </lineage>
</organism>
<gene>
    <name evidence="1" type="primary">mutS</name>
    <name type="ordered locus">PLES_14151</name>
</gene>
<dbReference type="EMBL" id="FM209186">
    <property type="protein sequence ID" value="CAW26143.1"/>
    <property type="molecule type" value="Genomic_DNA"/>
</dbReference>
<dbReference type="RefSeq" id="WP_012613730.1">
    <property type="nucleotide sequence ID" value="NC_011770.1"/>
</dbReference>
<dbReference type="SMR" id="B7V8C8"/>
<dbReference type="KEGG" id="pag:PLES_14151"/>
<dbReference type="HOGENOM" id="CLU_002472_4_0_6"/>
<dbReference type="GO" id="GO:0005829">
    <property type="term" value="C:cytosol"/>
    <property type="evidence" value="ECO:0007669"/>
    <property type="project" value="TreeGrafter"/>
</dbReference>
<dbReference type="GO" id="GO:0005524">
    <property type="term" value="F:ATP binding"/>
    <property type="evidence" value="ECO:0007669"/>
    <property type="project" value="UniProtKB-UniRule"/>
</dbReference>
<dbReference type="GO" id="GO:0140664">
    <property type="term" value="F:ATP-dependent DNA damage sensor activity"/>
    <property type="evidence" value="ECO:0007669"/>
    <property type="project" value="InterPro"/>
</dbReference>
<dbReference type="GO" id="GO:0003684">
    <property type="term" value="F:damaged DNA binding"/>
    <property type="evidence" value="ECO:0007669"/>
    <property type="project" value="UniProtKB-UniRule"/>
</dbReference>
<dbReference type="GO" id="GO:0030983">
    <property type="term" value="F:mismatched DNA binding"/>
    <property type="evidence" value="ECO:0007669"/>
    <property type="project" value="InterPro"/>
</dbReference>
<dbReference type="GO" id="GO:0006298">
    <property type="term" value="P:mismatch repair"/>
    <property type="evidence" value="ECO:0007669"/>
    <property type="project" value="UniProtKB-UniRule"/>
</dbReference>
<dbReference type="CDD" id="cd03284">
    <property type="entry name" value="ABC_MutS1"/>
    <property type="match status" value="1"/>
</dbReference>
<dbReference type="FunFam" id="1.10.1420.10:FF:000002">
    <property type="entry name" value="DNA mismatch repair protein MutS"/>
    <property type="match status" value="1"/>
</dbReference>
<dbReference type="FunFam" id="3.30.420.110:FF:000001">
    <property type="entry name" value="DNA mismatch repair protein MutS"/>
    <property type="match status" value="1"/>
</dbReference>
<dbReference type="FunFam" id="3.40.1170.10:FF:000001">
    <property type="entry name" value="DNA mismatch repair protein MutS"/>
    <property type="match status" value="1"/>
</dbReference>
<dbReference type="FunFam" id="3.40.50.300:FF:000283">
    <property type="entry name" value="DNA mismatch repair protein MutS"/>
    <property type="match status" value="1"/>
</dbReference>
<dbReference type="Gene3D" id="1.10.1420.10">
    <property type="match status" value="2"/>
</dbReference>
<dbReference type="Gene3D" id="6.10.140.430">
    <property type="match status" value="1"/>
</dbReference>
<dbReference type="Gene3D" id="3.40.1170.10">
    <property type="entry name" value="DNA repair protein MutS, domain I"/>
    <property type="match status" value="1"/>
</dbReference>
<dbReference type="Gene3D" id="3.30.420.110">
    <property type="entry name" value="MutS, connector domain"/>
    <property type="match status" value="1"/>
</dbReference>
<dbReference type="Gene3D" id="3.40.50.300">
    <property type="entry name" value="P-loop containing nucleotide triphosphate hydrolases"/>
    <property type="match status" value="1"/>
</dbReference>
<dbReference type="HAMAP" id="MF_00096">
    <property type="entry name" value="MutS"/>
    <property type="match status" value="1"/>
</dbReference>
<dbReference type="InterPro" id="IPR005748">
    <property type="entry name" value="DNA_mismatch_repair_MutS"/>
</dbReference>
<dbReference type="InterPro" id="IPR007695">
    <property type="entry name" value="DNA_mismatch_repair_MutS-lik_N"/>
</dbReference>
<dbReference type="InterPro" id="IPR017261">
    <property type="entry name" value="DNA_mismatch_repair_MutS/MSH"/>
</dbReference>
<dbReference type="InterPro" id="IPR000432">
    <property type="entry name" value="DNA_mismatch_repair_MutS_C"/>
</dbReference>
<dbReference type="InterPro" id="IPR007861">
    <property type="entry name" value="DNA_mismatch_repair_MutS_clamp"/>
</dbReference>
<dbReference type="InterPro" id="IPR007696">
    <property type="entry name" value="DNA_mismatch_repair_MutS_core"/>
</dbReference>
<dbReference type="InterPro" id="IPR016151">
    <property type="entry name" value="DNA_mismatch_repair_MutS_N"/>
</dbReference>
<dbReference type="InterPro" id="IPR036187">
    <property type="entry name" value="DNA_mismatch_repair_MutS_sf"/>
</dbReference>
<dbReference type="InterPro" id="IPR007860">
    <property type="entry name" value="DNA_mmatch_repair_MutS_con_dom"/>
</dbReference>
<dbReference type="InterPro" id="IPR045076">
    <property type="entry name" value="MutS"/>
</dbReference>
<dbReference type="InterPro" id="IPR036678">
    <property type="entry name" value="MutS_con_dom_sf"/>
</dbReference>
<dbReference type="InterPro" id="IPR027417">
    <property type="entry name" value="P-loop_NTPase"/>
</dbReference>
<dbReference type="NCBIfam" id="TIGR01070">
    <property type="entry name" value="mutS1"/>
    <property type="match status" value="1"/>
</dbReference>
<dbReference type="NCBIfam" id="NF003810">
    <property type="entry name" value="PRK05399.1"/>
    <property type="match status" value="1"/>
</dbReference>
<dbReference type="PANTHER" id="PTHR11361:SF34">
    <property type="entry name" value="DNA MISMATCH REPAIR PROTEIN MSH1, MITOCHONDRIAL"/>
    <property type="match status" value="1"/>
</dbReference>
<dbReference type="PANTHER" id="PTHR11361">
    <property type="entry name" value="DNA MISMATCH REPAIR PROTEIN MUTS FAMILY MEMBER"/>
    <property type="match status" value="1"/>
</dbReference>
<dbReference type="Pfam" id="PF01624">
    <property type="entry name" value="MutS_I"/>
    <property type="match status" value="1"/>
</dbReference>
<dbReference type="Pfam" id="PF05188">
    <property type="entry name" value="MutS_II"/>
    <property type="match status" value="1"/>
</dbReference>
<dbReference type="Pfam" id="PF05192">
    <property type="entry name" value="MutS_III"/>
    <property type="match status" value="1"/>
</dbReference>
<dbReference type="Pfam" id="PF05190">
    <property type="entry name" value="MutS_IV"/>
    <property type="match status" value="1"/>
</dbReference>
<dbReference type="Pfam" id="PF00488">
    <property type="entry name" value="MutS_V"/>
    <property type="match status" value="1"/>
</dbReference>
<dbReference type="PIRSF" id="PIRSF037677">
    <property type="entry name" value="DNA_mis_repair_Msh6"/>
    <property type="match status" value="1"/>
</dbReference>
<dbReference type="SMART" id="SM00534">
    <property type="entry name" value="MUTSac"/>
    <property type="match status" value="1"/>
</dbReference>
<dbReference type="SMART" id="SM00533">
    <property type="entry name" value="MUTSd"/>
    <property type="match status" value="1"/>
</dbReference>
<dbReference type="SUPFAM" id="SSF55271">
    <property type="entry name" value="DNA repair protein MutS, domain I"/>
    <property type="match status" value="1"/>
</dbReference>
<dbReference type="SUPFAM" id="SSF53150">
    <property type="entry name" value="DNA repair protein MutS, domain II"/>
    <property type="match status" value="1"/>
</dbReference>
<dbReference type="SUPFAM" id="SSF48334">
    <property type="entry name" value="DNA repair protein MutS, domain III"/>
    <property type="match status" value="1"/>
</dbReference>
<dbReference type="SUPFAM" id="SSF52540">
    <property type="entry name" value="P-loop containing nucleoside triphosphate hydrolases"/>
    <property type="match status" value="1"/>
</dbReference>
<dbReference type="PROSITE" id="PS00486">
    <property type="entry name" value="DNA_MISMATCH_REPAIR_2"/>
    <property type="match status" value="1"/>
</dbReference>
<name>MUTS_PSEA8</name>
<protein>
    <recommendedName>
        <fullName evidence="1">DNA mismatch repair protein MutS</fullName>
    </recommendedName>
</protein>